<keyword id="KW-0963">Cytoplasm</keyword>
<keyword id="KW-0378">Hydrolase</keyword>
<keyword id="KW-0540">Nuclease</keyword>
<keyword id="KW-1185">Reference proteome</keyword>
<keyword id="KW-0690">Ribosome biogenesis</keyword>
<protein>
    <recommendedName>
        <fullName evidence="1">Putative pre-16S rRNA nuclease</fullName>
        <ecNumber evidence="1">3.1.-.-</ecNumber>
    </recommendedName>
</protein>
<feature type="chain" id="PRO_0000172041" description="Putative pre-16S rRNA nuclease">
    <location>
        <begin position="1"/>
        <end position="142"/>
    </location>
</feature>
<name>YQGF_BLOFL</name>
<dbReference type="EC" id="3.1.-.-" evidence="1"/>
<dbReference type="EMBL" id="BX248583">
    <property type="protein sequence ID" value="CAD83321.1"/>
    <property type="molecule type" value="Genomic_DNA"/>
</dbReference>
<dbReference type="SMR" id="Q7VRG7"/>
<dbReference type="STRING" id="203907.Bfl250"/>
<dbReference type="KEGG" id="bfl:Bfl250"/>
<dbReference type="eggNOG" id="COG0816">
    <property type="taxonomic scope" value="Bacteria"/>
</dbReference>
<dbReference type="HOGENOM" id="CLU_098240_3_0_6"/>
<dbReference type="OrthoDB" id="9796140at2"/>
<dbReference type="Proteomes" id="UP000002192">
    <property type="component" value="Chromosome"/>
</dbReference>
<dbReference type="GO" id="GO:0005829">
    <property type="term" value="C:cytosol"/>
    <property type="evidence" value="ECO:0007669"/>
    <property type="project" value="TreeGrafter"/>
</dbReference>
<dbReference type="GO" id="GO:0004518">
    <property type="term" value="F:nuclease activity"/>
    <property type="evidence" value="ECO:0007669"/>
    <property type="project" value="UniProtKB-KW"/>
</dbReference>
<dbReference type="GO" id="GO:0000967">
    <property type="term" value="P:rRNA 5'-end processing"/>
    <property type="evidence" value="ECO:0007669"/>
    <property type="project" value="UniProtKB-UniRule"/>
</dbReference>
<dbReference type="CDD" id="cd16964">
    <property type="entry name" value="YqgF"/>
    <property type="match status" value="1"/>
</dbReference>
<dbReference type="Gene3D" id="3.30.420.140">
    <property type="entry name" value="YqgF/RNase H-like domain"/>
    <property type="match status" value="1"/>
</dbReference>
<dbReference type="HAMAP" id="MF_00651">
    <property type="entry name" value="Nuclease_YqgF"/>
    <property type="match status" value="1"/>
</dbReference>
<dbReference type="InterPro" id="IPR012337">
    <property type="entry name" value="RNaseH-like_sf"/>
</dbReference>
<dbReference type="InterPro" id="IPR005227">
    <property type="entry name" value="YqgF"/>
</dbReference>
<dbReference type="InterPro" id="IPR006641">
    <property type="entry name" value="YqgF/RNaseH-like_dom"/>
</dbReference>
<dbReference type="InterPro" id="IPR037027">
    <property type="entry name" value="YqgF/RNaseH-like_dom_sf"/>
</dbReference>
<dbReference type="NCBIfam" id="TIGR00250">
    <property type="entry name" value="RNAse_H_YqgF"/>
    <property type="match status" value="1"/>
</dbReference>
<dbReference type="PANTHER" id="PTHR33317">
    <property type="entry name" value="POLYNUCLEOTIDYL TRANSFERASE, RIBONUCLEASE H-LIKE SUPERFAMILY PROTEIN"/>
    <property type="match status" value="1"/>
</dbReference>
<dbReference type="PANTHER" id="PTHR33317:SF4">
    <property type="entry name" value="POLYNUCLEOTIDYL TRANSFERASE, RIBONUCLEASE H-LIKE SUPERFAMILY PROTEIN"/>
    <property type="match status" value="1"/>
</dbReference>
<dbReference type="Pfam" id="PF03652">
    <property type="entry name" value="RuvX"/>
    <property type="match status" value="1"/>
</dbReference>
<dbReference type="SMART" id="SM00732">
    <property type="entry name" value="YqgFc"/>
    <property type="match status" value="1"/>
</dbReference>
<dbReference type="SUPFAM" id="SSF53098">
    <property type="entry name" value="Ribonuclease H-like"/>
    <property type="match status" value="1"/>
</dbReference>
<gene>
    <name evidence="1" type="primary">yqgF</name>
    <name type="ordered locus">Bfl250</name>
</gene>
<organism>
    <name type="scientific">Blochmanniella floridana</name>
    <dbReference type="NCBI Taxonomy" id="203907"/>
    <lineage>
        <taxon>Bacteria</taxon>
        <taxon>Pseudomonadati</taxon>
        <taxon>Pseudomonadota</taxon>
        <taxon>Gammaproteobacteria</taxon>
        <taxon>Enterobacterales</taxon>
        <taxon>Enterobacteriaceae</taxon>
        <taxon>ant endosymbionts</taxon>
        <taxon>Candidatus Blochmanniella</taxon>
    </lineage>
</organism>
<accession>Q7VRG7</accession>
<sequence>MIKKIAIIMAFDFGTKKIGIAIGQKITGTTQSLEILPSKFGIPNWKKIEHIFNVWKPNKLIVGLPLKMNGNTQHITLLSKRFAVQLTHRFKITVEMHDERFTTIEARSIYFQHFRYYYRKKTTPIDSIAAEIILKSWLNQND</sequence>
<evidence type="ECO:0000255" key="1">
    <source>
        <dbReference type="HAMAP-Rule" id="MF_00651"/>
    </source>
</evidence>
<reference key="1">
    <citation type="journal article" date="2003" name="Proc. Natl. Acad. Sci. U.S.A.">
        <title>The genome sequence of Blochmannia floridanus: comparative analysis of reduced genomes.</title>
        <authorList>
            <person name="Gil R."/>
            <person name="Silva F.J."/>
            <person name="Zientz E."/>
            <person name="Delmotte F."/>
            <person name="Gonzalez-Candelas F."/>
            <person name="Latorre A."/>
            <person name="Rausell C."/>
            <person name="Kamerbeek J."/>
            <person name="Gadau J."/>
            <person name="Hoelldobler B."/>
            <person name="van Ham R.C.H.J."/>
            <person name="Gross R."/>
            <person name="Moya A."/>
        </authorList>
    </citation>
    <scope>NUCLEOTIDE SEQUENCE [LARGE SCALE GENOMIC DNA]</scope>
</reference>
<proteinExistence type="inferred from homology"/>
<comment type="function">
    <text evidence="1">Could be a nuclease involved in processing of the 5'-end of pre-16S rRNA.</text>
</comment>
<comment type="subcellular location">
    <subcellularLocation>
        <location evidence="1">Cytoplasm</location>
    </subcellularLocation>
</comment>
<comment type="similarity">
    <text evidence="1">Belongs to the YqgF nuclease family.</text>
</comment>